<name>APT_YERPA</name>
<accession>Q1C4P3</accession>
<dbReference type="EC" id="2.4.2.7" evidence="1"/>
<dbReference type="EMBL" id="CP000308">
    <property type="protein sequence ID" value="ABG14579.1"/>
    <property type="molecule type" value="Genomic_DNA"/>
</dbReference>
<dbReference type="RefSeq" id="WP_002208606.1">
    <property type="nucleotide sequence ID" value="NZ_CP009906.1"/>
</dbReference>
<dbReference type="SMR" id="Q1C4P3"/>
<dbReference type="GeneID" id="57975588"/>
<dbReference type="KEGG" id="ypa:YPA_2617"/>
<dbReference type="UniPathway" id="UPA00588">
    <property type="reaction ID" value="UER00646"/>
</dbReference>
<dbReference type="Proteomes" id="UP000001971">
    <property type="component" value="Chromosome"/>
</dbReference>
<dbReference type="GO" id="GO:0005829">
    <property type="term" value="C:cytosol"/>
    <property type="evidence" value="ECO:0007669"/>
    <property type="project" value="TreeGrafter"/>
</dbReference>
<dbReference type="GO" id="GO:0003999">
    <property type="term" value="F:adenine phosphoribosyltransferase activity"/>
    <property type="evidence" value="ECO:0007669"/>
    <property type="project" value="UniProtKB-UniRule"/>
</dbReference>
<dbReference type="GO" id="GO:0006168">
    <property type="term" value="P:adenine salvage"/>
    <property type="evidence" value="ECO:0007669"/>
    <property type="project" value="InterPro"/>
</dbReference>
<dbReference type="GO" id="GO:0044209">
    <property type="term" value="P:AMP salvage"/>
    <property type="evidence" value="ECO:0007669"/>
    <property type="project" value="UniProtKB-UniRule"/>
</dbReference>
<dbReference type="GO" id="GO:0006166">
    <property type="term" value="P:purine ribonucleoside salvage"/>
    <property type="evidence" value="ECO:0007669"/>
    <property type="project" value="UniProtKB-KW"/>
</dbReference>
<dbReference type="CDD" id="cd06223">
    <property type="entry name" value="PRTases_typeI"/>
    <property type="match status" value="1"/>
</dbReference>
<dbReference type="FunFam" id="3.40.50.2020:FF:000004">
    <property type="entry name" value="Adenine phosphoribosyltransferase"/>
    <property type="match status" value="1"/>
</dbReference>
<dbReference type="Gene3D" id="3.40.50.2020">
    <property type="match status" value="1"/>
</dbReference>
<dbReference type="HAMAP" id="MF_00004">
    <property type="entry name" value="Aden_phosphoribosyltr"/>
    <property type="match status" value="1"/>
</dbReference>
<dbReference type="InterPro" id="IPR005764">
    <property type="entry name" value="Ade_phspho_trans"/>
</dbReference>
<dbReference type="InterPro" id="IPR050120">
    <property type="entry name" value="Adenine_PRTase"/>
</dbReference>
<dbReference type="InterPro" id="IPR000836">
    <property type="entry name" value="PRibTrfase_dom"/>
</dbReference>
<dbReference type="InterPro" id="IPR029057">
    <property type="entry name" value="PRTase-like"/>
</dbReference>
<dbReference type="NCBIfam" id="TIGR01090">
    <property type="entry name" value="apt"/>
    <property type="match status" value="1"/>
</dbReference>
<dbReference type="NCBIfam" id="NF002632">
    <property type="entry name" value="PRK02304.1-1"/>
    <property type="match status" value="1"/>
</dbReference>
<dbReference type="NCBIfam" id="NF002633">
    <property type="entry name" value="PRK02304.1-2"/>
    <property type="match status" value="1"/>
</dbReference>
<dbReference type="NCBIfam" id="NF002634">
    <property type="entry name" value="PRK02304.1-3"/>
    <property type="match status" value="1"/>
</dbReference>
<dbReference type="NCBIfam" id="NF002636">
    <property type="entry name" value="PRK02304.1-5"/>
    <property type="match status" value="1"/>
</dbReference>
<dbReference type="PANTHER" id="PTHR11776">
    <property type="entry name" value="ADENINE PHOSPHORIBOSYLTRANSFERASE"/>
    <property type="match status" value="1"/>
</dbReference>
<dbReference type="PANTHER" id="PTHR11776:SF7">
    <property type="entry name" value="PHOSPHORIBOSYLTRANSFERASE DOMAIN-CONTAINING PROTEIN"/>
    <property type="match status" value="1"/>
</dbReference>
<dbReference type="Pfam" id="PF00156">
    <property type="entry name" value="Pribosyltran"/>
    <property type="match status" value="1"/>
</dbReference>
<dbReference type="SUPFAM" id="SSF53271">
    <property type="entry name" value="PRTase-like"/>
    <property type="match status" value="1"/>
</dbReference>
<dbReference type="PROSITE" id="PS00103">
    <property type="entry name" value="PUR_PYR_PR_TRANSFER"/>
    <property type="match status" value="1"/>
</dbReference>
<feature type="chain" id="PRO_1000000375" description="Adenine phosphoribosyltransferase">
    <location>
        <begin position="1"/>
        <end position="187"/>
    </location>
</feature>
<proteinExistence type="inferred from homology"/>
<sequence length="187" mass="20142">MTVSASKTAQQLKYIKDSIKTIPDYPKAGILFRDVTSLLENPKAYSASIKLLSEHYSESGVTKVVGTEARGFLFGAPVALALGVGFVPVRKPGKLPRETISESYELEYGTDTLEIHTDSIQPGDKVLVVDDLLATGGTIEATVKLIRRLGGEVVHAAFIINLPELGGEARLTQQGIHCYSLVSFDGH</sequence>
<organism>
    <name type="scientific">Yersinia pestis bv. Antiqua (strain Antiqua)</name>
    <dbReference type="NCBI Taxonomy" id="360102"/>
    <lineage>
        <taxon>Bacteria</taxon>
        <taxon>Pseudomonadati</taxon>
        <taxon>Pseudomonadota</taxon>
        <taxon>Gammaproteobacteria</taxon>
        <taxon>Enterobacterales</taxon>
        <taxon>Yersiniaceae</taxon>
        <taxon>Yersinia</taxon>
    </lineage>
</organism>
<reference key="1">
    <citation type="journal article" date="2006" name="J. Bacteriol.">
        <title>Complete genome sequence of Yersinia pestis strains Antiqua and Nepal516: evidence of gene reduction in an emerging pathogen.</title>
        <authorList>
            <person name="Chain P.S.G."/>
            <person name="Hu P."/>
            <person name="Malfatti S.A."/>
            <person name="Radnedge L."/>
            <person name="Larimer F."/>
            <person name="Vergez L.M."/>
            <person name="Worsham P."/>
            <person name="Chu M.C."/>
            <person name="Andersen G.L."/>
        </authorList>
    </citation>
    <scope>NUCLEOTIDE SEQUENCE [LARGE SCALE GENOMIC DNA]</scope>
    <source>
        <strain>Antiqua</strain>
    </source>
</reference>
<keyword id="KW-0963">Cytoplasm</keyword>
<keyword id="KW-0328">Glycosyltransferase</keyword>
<keyword id="KW-0660">Purine salvage</keyword>
<keyword id="KW-0808">Transferase</keyword>
<protein>
    <recommendedName>
        <fullName evidence="1">Adenine phosphoribosyltransferase</fullName>
        <shortName evidence="1">APRT</shortName>
        <ecNumber evidence="1">2.4.2.7</ecNumber>
    </recommendedName>
</protein>
<evidence type="ECO:0000255" key="1">
    <source>
        <dbReference type="HAMAP-Rule" id="MF_00004"/>
    </source>
</evidence>
<gene>
    <name evidence="1" type="primary">apt</name>
    <name type="ordered locus">YPA_2617</name>
</gene>
<comment type="function">
    <text evidence="1">Catalyzes a salvage reaction resulting in the formation of AMP, that is energically less costly than de novo synthesis.</text>
</comment>
<comment type="catalytic activity">
    <reaction evidence="1">
        <text>AMP + diphosphate = 5-phospho-alpha-D-ribose 1-diphosphate + adenine</text>
        <dbReference type="Rhea" id="RHEA:16609"/>
        <dbReference type="ChEBI" id="CHEBI:16708"/>
        <dbReference type="ChEBI" id="CHEBI:33019"/>
        <dbReference type="ChEBI" id="CHEBI:58017"/>
        <dbReference type="ChEBI" id="CHEBI:456215"/>
        <dbReference type="EC" id="2.4.2.7"/>
    </reaction>
</comment>
<comment type="pathway">
    <text evidence="1">Purine metabolism; AMP biosynthesis via salvage pathway; AMP from adenine: step 1/1.</text>
</comment>
<comment type="subunit">
    <text evidence="1">Homodimer.</text>
</comment>
<comment type="subcellular location">
    <subcellularLocation>
        <location evidence="1">Cytoplasm</location>
    </subcellularLocation>
</comment>
<comment type="similarity">
    <text evidence="1">Belongs to the purine/pyrimidine phosphoribosyltransferase family.</text>
</comment>